<sequence length="232" mass="23974">MTTSKIATAFKTATFALAAGAVALGLASPADAAAGTMYGDPAAAAKYWRQQTYDDCVLMSAADVIGQVTGREPSERAIIKVAQSTPSVVHPGSIYTKPADAEHPNSGMGTSVADIPTLLAHYGVDAVITDEDHATATGVATGMAALEQYLGSGHAVIVSINAEMIWGQPVEETDSAGNPRSDHAVVVTGVDTENGIVHLNDSGTPTGRDEQIPMETFVEAWATSHDFMAVTT</sequence>
<dbReference type="EMBL" id="AL123456">
    <property type="protein sequence ID" value="CCP44024.1"/>
    <property type="molecule type" value="Genomic_DNA"/>
</dbReference>
<dbReference type="PIR" id="D70754">
    <property type="entry name" value="D70754"/>
</dbReference>
<dbReference type="RefSeq" id="NP_215784.1">
    <property type="nucleotide sequence ID" value="NC_000962.3"/>
</dbReference>
<dbReference type="RefSeq" id="WP_003898800.1">
    <property type="nucleotide sequence ID" value="NZ_NVQJ01000030.1"/>
</dbReference>
<dbReference type="SMR" id="P9WM47"/>
<dbReference type="STRING" id="83332.Rv1268c"/>
<dbReference type="PaxDb" id="83332-Rv1268c"/>
<dbReference type="DNASU" id="887033"/>
<dbReference type="GeneID" id="887033"/>
<dbReference type="KEGG" id="mtu:Rv1268c"/>
<dbReference type="KEGG" id="mtv:RVBD_1268c"/>
<dbReference type="TubercuList" id="Rv1268c"/>
<dbReference type="eggNOG" id="COG3271">
    <property type="taxonomic scope" value="Bacteria"/>
</dbReference>
<dbReference type="InParanoid" id="P9WM47"/>
<dbReference type="OrthoDB" id="461196at2"/>
<dbReference type="Proteomes" id="UP000001584">
    <property type="component" value="Chromosome"/>
</dbReference>
<dbReference type="Gene3D" id="3.90.70.10">
    <property type="entry name" value="Cysteine proteinases"/>
    <property type="match status" value="1"/>
</dbReference>
<dbReference type="InterPro" id="IPR025660">
    <property type="entry name" value="Pept_his_AS"/>
</dbReference>
<dbReference type="InterPro" id="IPR039564">
    <property type="entry name" value="Peptidase_C39-like"/>
</dbReference>
<dbReference type="Pfam" id="PF13529">
    <property type="entry name" value="Peptidase_C39_2"/>
    <property type="match status" value="1"/>
</dbReference>
<reference key="1">
    <citation type="journal article" date="1998" name="Nature">
        <title>Deciphering the biology of Mycobacterium tuberculosis from the complete genome sequence.</title>
        <authorList>
            <person name="Cole S.T."/>
            <person name="Brosch R."/>
            <person name="Parkhill J."/>
            <person name="Garnier T."/>
            <person name="Churcher C.M."/>
            <person name="Harris D.E."/>
            <person name="Gordon S.V."/>
            <person name="Eiglmeier K."/>
            <person name="Gas S."/>
            <person name="Barry C.E. III"/>
            <person name="Tekaia F."/>
            <person name="Badcock K."/>
            <person name="Basham D."/>
            <person name="Brown D."/>
            <person name="Chillingworth T."/>
            <person name="Connor R."/>
            <person name="Davies R.M."/>
            <person name="Devlin K."/>
            <person name="Feltwell T."/>
            <person name="Gentles S."/>
            <person name="Hamlin N."/>
            <person name="Holroyd S."/>
            <person name="Hornsby T."/>
            <person name="Jagels K."/>
            <person name="Krogh A."/>
            <person name="McLean J."/>
            <person name="Moule S."/>
            <person name="Murphy L.D."/>
            <person name="Oliver S."/>
            <person name="Osborne J."/>
            <person name="Quail M.A."/>
            <person name="Rajandream M.A."/>
            <person name="Rogers J."/>
            <person name="Rutter S."/>
            <person name="Seeger K."/>
            <person name="Skelton S."/>
            <person name="Squares S."/>
            <person name="Squares R."/>
            <person name="Sulston J.E."/>
            <person name="Taylor K."/>
            <person name="Whitehead S."/>
            <person name="Barrell B.G."/>
        </authorList>
    </citation>
    <scope>NUCLEOTIDE SEQUENCE [LARGE SCALE GENOMIC DNA]</scope>
    <source>
        <strain>ATCC 25618 / H37Rv</strain>
    </source>
</reference>
<keyword id="KW-1185">Reference proteome</keyword>
<keyword id="KW-0732">Signal</keyword>
<accession>P9WM47</accession>
<accession>L0T8W0</accession>
<accession>P64791</accession>
<accession>Q11051</accession>
<proteinExistence type="inferred from homology"/>
<protein>
    <recommendedName>
        <fullName>Uncharacterized protein Rv1268c</fullName>
    </recommendedName>
</protein>
<feature type="signal peptide" evidence="1">
    <location>
        <begin position="1"/>
        <end position="32"/>
    </location>
</feature>
<feature type="chain" id="PRO_0000014087" description="Uncharacterized protein Rv1268c">
    <location>
        <begin position="33"/>
        <end position="232"/>
    </location>
</feature>
<name>Y1268_MYCTU</name>
<gene>
    <name type="ordered locus">Rv1268c</name>
    <name type="ORF">MTCY50.14</name>
</gene>
<organism>
    <name type="scientific">Mycobacterium tuberculosis (strain ATCC 25618 / H37Rv)</name>
    <dbReference type="NCBI Taxonomy" id="83332"/>
    <lineage>
        <taxon>Bacteria</taxon>
        <taxon>Bacillati</taxon>
        <taxon>Actinomycetota</taxon>
        <taxon>Actinomycetes</taxon>
        <taxon>Mycobacteriales</taxon>
        <taxon>Mycobacteriaceae</taxon>
        <taxon>Mycobacterium</taxon>
        <taxon>Mycobacterium tuberculosis complex</taxon>
    </lineage>
</organism>
<evidence type="ECO:0000255" key="1"/>